<accession>Q5HMY5</accession>
<sequence>MKIIDKKIEQFAQYLQRKNNLDHIQFLKIRLGMQVLAINIEKSIVVYGLAIIFHTFFYTLLTHLSYFLIRRHAHGTHANSSLLCHIQNIIFFIIFPYLIIKLDINYFVLLSMALVGLIITILYAPAATKKQPIPRRLVKRKKILSIFLYCTIVVISLVTKEPVNKLILFGVILESLTLLPIFFPKEDINHGKHF</sequence>
<proteinExistence type="inferred from homology"/>
<comment type="function">
    <text evidence="1">Essential for the production of a quorum sensing system signal molecule, the autoinducing peptide (AIP). This quorum sensing system is responsible for the regulation of the expression of virulence factor genes. Involved in the proteolytic processing of AgrD, the precursor of AIP.</text>
</comment>
<comment type="subcellular location">
    <subcellularLocation>
        <location evidence="1">Cell membrane</location>
        <topology evidence="1">Multi-pass membrane protein</topology>
    </subcellularLocation>
</comment>
<comment type="similarity">
    <text evidence="1">Belongs to the AgrB family.</text>
</comment>
<name>AGRB_STAEQ</name>
<feature type="chain" id="PRO_0000168128" description="Accessory gene regulator protein B">
    <location>
        <begin position="1"/>
        <end position="194"/>
    </location>
</feature>
<feature type="transmembrane region" description="Helical" evidence="1">
    <location>
        <begin position="44"/>
        <end position="64"/>
    </location>
</feature>
<feature type="transmembrane region" description="Helical" evidence="1">
    <location>
        <begin position="80"/>
        <end position="100"/>
    </location>
</feature>
<feature type="transmembrane region" description="Helical" evidence="1">
    <location>
        <begin position="107"/>
        <end position="127"/>
    </location>
</feature>
<feature type="transmembrane region" description="Helical" evidence="1">
    <location>
        <begin position="142"/>
        <end position="162"/>
    </location>
</feature>
<feature type="transmembrane region" description="Helical" evidence="1">
    <location>
        <begin position="163"/>
        <end position="183"/>
    </location>
</feature>
<evidence type="ECO:0000255" key="1">
    <source>
        <dbReference type="HAMAP-Rule" id="MF_00784"/>
    </source>
</evidence>
<protein>
    <recommendedName>
        <fullName evidence="1">Accessory gene regulator protein B</fullName>
        <ecNumber evidence="1">3.4.-.-</ecNumber>
    </recommendedName>
</protein>
<gene>
    <name evidence="1" type="primary">agrB</name>
    <name type="ordered locus">SERP1490</name>
</gene>
<keyword id="KW-1003">Cell membrane</keyword>
<keyword id="KW-0378">Hydrolase</keyword>
<keyword id="KW-0472">Membrane</keyword>
<keyword id="KW-0645">Protease</keyword>
<keyword id="KW-0673">Quorum sensing</keyword>
<keyword id="KW-1185">Reference proteome</keyword>
<keyword id="KW-0812">Transmembrane</keyword>
<keyword id="KW-1133">Transmembrane helix</keyword>
<keyword id="KW-0843">Virulence</keyword>
<organism>
    <name type="scientific">Staphylococcus epidermidis (strain ATCC 35984 / DSM 28319 / BCRC 17069 / CCUG 31568 / BM 3577 / RP62A)</name>
    <dbReference type="NCBI Taxonomy" id="176279"/>
    <lineage>
        <taxon>Bacteria</taxon>
        <taxon>Bacillati</taxon>
        <taxon>Bacillota</taxon>
        <taxon>Bacilli</taxon>
        <taxon>Bacillales</taxon>
        <taxon>Staphylococcaceae</taxon>
        <taxon>Staphylococcus</taxon>
    </lineage>
</organism>
<dbReference type="EC" id="3.4.-.-" evidence="1"/>
<dbReference type="EMBL" id="CP000029">
    <property type="protein sequence ID" value="AAW54814.1"/>
    <property type="molecule type" value="Genomic_DNA"/>
</dbReference>
<dbReference type="RefSeq" id="WP_001830005.1">
    <property type="nucleotide sequence ID" value="NC_002976.3"/>
</dbReference>
<dbReference type="SMR" id="Q5HMY5"/>
<dbReference type="STRING" id="176279.SERP1490"/>
<dbReference type="MEROPS" id="C75.001"/>
<dbReference type="KEGG" id="ser:SERP1490"/>
<dbReference type="eggNOG" id="COG4512">
    <property type="taxonomic scope" value="Bacteria"/>
</dbReference>
<dbReference type="HOGENOM" id="CLU_098969_2_2_9"/>
<dbReference type="Proteomes" id="UP000000531">
    <property type="component" value="Chromosome"/>
</dbReference>
<dbReference type="GO" id="GO:0005886">
    <property type="term" value="C:plasma membrane"/>
    <property type="evidence" value="ECO:0007669"/>
    <property type="project" value="UniProtKB-SubCell"/>
</dbReference>
<dbReference type="GO" id="GO:0008233">
    <property type="term" value="F:peptidase activity"/>
    <property type="evidence" value="ECO:0007669"/>
    <property type="project" value="UniProtKB-UniRule"/>
</dbReference>
<dbReference type="GO" id="GO:0006508">
    <property type="term" value="P:proteolysis"/>
    <property type="evidence" value="ECO:0007669"/>
    <property type="project" value="UniProtKB-KW"/>
</dbReference>
<dbReference type="GO" id="GO:0009372">
    <property type="term" value="P:quorum sensing"/>
    <property type="evidence" value="ECO:0007669"/>
    <property type="project" value="UniProtKB-UniRule"/>
</dbReference>
<dbReference type="HAMAP" id="MF_00784">
    <property type="entry name" value="AgrB"/>
    <property type="match status" value="1"/>
</dbReference>
<dbReference type="InterPro" id="IPR006741">
    <property type="entry name" value="AgrB"/>
</dbReference>
<dbReference type="Pfam" id="PF04647">
    <property type="entry name" value="AgrB"/>
    <property type="match status" value="1"/>
</dbReference>
<dbReference type="SMART" id="SM00793">
    <property type="entry name" value="AgrB"/>
    <property type="match status" value="1"/>
</dbReference>
<reference key="1">
    <citation type="journal article" date="2005" name="J. Bacteriol.">
        <title>Insights on evolution of virulence and resistance from the complete genome analysis of an early methicillin-resistant Staphylococcus aureus strain and a biofilm-producing methicillin-resistant Staphylococcus epidermidis strain.</title>
        <authorList>
            <person name="Gill S.R."/>
            <person name="Fouts D.E."/>
            <person name="Archer G.L."/>
            <person name="Mongodin E.F."/>
            <person name="DeBoy R.T."/>
            <person name="Ravel J."/>
            <person name="Paulsen I.T."/>
            <person name="Kolonay J.F."/>
            <person name="Brinkac L.M."/>
            <person name="Beanan M.J."/>
            <person name="Dodson R.J."/>
            <person name="Daugherty S.C."/>
            <person name="Madupu R."/>
            <person name="Angiuoli S.V."/>
            <person name="Durkin A.S."/>
            <person name="Haft D.H."/>
            <person name="Vamathevan J.J."/>
            <person name="Khouri H."/>
            <person name="Utterback T.R."/>
            <person name="Lee C."/>
            <person name="Dimitrov G."/>
            <person name="Jiang L."/>
            <person name="Qin H."/>
            <person name="Weidman J."/>
            <person name="Tran K."/>
            <person name="Kang K.H."/>
            <person name="Hance I.R."/>
            <person name="Nelson K.E."/>
            <person name="Fraser C.M."/>
        </authorList>
    </citation>
    <scope>NUCLEOTIDE SEQUENCE [LARGE SCALE GENOMIC DNA]</scope>
    <source>
        <strain>ATCC 35984 / DSM 28319 / BCRC 17069 / CCUG 31568 / BM 3577 / RP62A</strain>
    </source>
</reference>